<keyword id="KW-0067">ATP-binding</keyword>
<keyword id="KW-0238">DNA-binding</keyword>
<keyword id="KW-0547">Nucleotide-binding</keyword>
<keyword id="KW-0597">Phosphoprotein</keyword>
<keyword id="KW-0678">Repressor</keyword>
<keyword id="KW-0804">Transcription</keyword>
<keyword id="KW-0805">Transcription regulation</keyword>
<keyword id="KW-0902">Two-component regulatory system</keyword>
<feature type="chain" id="PRO_0000081120" description="Regulatory protein LuxO">
    <location>
        <begin position="1"/>
        <end position="453"/>
    </location>
</feature>
<feature type="domain" description="Response regulatory" evidence="2">
    <location>
        <begin position="1"/>
        <end position="112"/>
    </location>
</feature>
<feature type="domain" description="Sigma-54 factor interaction" evidence="3">
    <location>
        <begin position="133"/>
        <end position="362"/>
    </location>
</feature>
<feature type="binding site" evidence="3">
    <location>
        <begin position="161"/>
        <end position="168"/>
    </location>
    <ligand>
        <name>ATP</name>
        <dbReference type="ChEBI" id="CHEBI:30616"/>
    </ligand>
</feature>
<feature type="binding site" evidence="3">
    <location>
        <begin position="224"/>
        <end position="233"/>
    </location>
    <ligand>
        <name>ATP</name>
        <dbReference type="ChEBI" id="CHEBI:30616"/>
    </ligand>
</feature>
<feature type="modified residue" description="4-aspartylphosphate" evidence="2">
    <location>
        <position position="47"/>
    </location>
</feature>
<protein>
    <recommendedName>
        <fullName>Regulatory protein LuxO</fullName>
    </recommendedName>
</protein>
<comment type="function">
    <text evidence="1">Involved in the regulation of different processes depending on the cell density. Acts together with sigma-54 to repress, perhaps indirectly, some genes (By similarity).</text>
</comment>
<comment type="sequence caution" evidence="4">
    <conflict type="erroneous initiation">
        <sequence resource="EMBL-CDS" id="BAC93959"/>
    </conflict>
</comment>
<evidence type="ECO:0000250" key="1"/>
<evidence type="ECO:0000255" key="2">
    <source>
        <dbReference type="PROSITE-ProRule" id="PRU00169"/>
    </source>
</evidence>
<evidence type="ECO:0000255" key="3">
    <source>
        <dbReference type="PROSITE-ProRule" id="PRU00193"/>
    </source>
</evidence>
<evidence type="ECO:0000305" key="4"/>
<proteinExistence type="inferred from homology"/>
<accession>Q7MM78</accession>
<dbReference type="EMBL" id="BA000037">
    <property type="protein sequence ID" value="BAC93959.1"/>
    <property type="status" value="ALT_INIT"/>
    <property type="molecule type" value="Genomic_DNA"/>
</dbReference>
<dbReference type="SMR" id="Q7MM78"/>
<dbReference type="DIP" id="DIP-61931N"/>
<dbReference type="STRING" id="672.VV93_v1c11140"/>
<dbReference type="KEGG" id="vvy:VV1195"/>
<dbReference type="eggNOG" id="COG2204">
    <property type="taxonomic scope" value="Bacteria"/>
</dbReference>
<dbReference type="HOGENOM" id="CLU_000445_0_6_6"/>
<dbReference type="Proteomes" id="UP000002675">
    <property type="component" value="Chromosome I"/>
</dbReference>
<dbReference type="GO" id="GO:0005524">
    <property type="term" value="F:ATP binding"/>
    <property type="evidence" value="ECO:0007669"/>
    <property type="project" value="UniProtKB-KW"/>
</dbReference>
<dbReference type="GO" id="GO:0016887">
    <property type="term" value="F:ATP hydrolysis activity"/>
    <property type="evidence" value="ECO:0007669"/>
    <property type="project" value="InterPro"/>
</dbReference>
<dbReference type="GO" id="GO:0043565">
    <property type="term" value="F:sequence-specific DNA binding"/>
    <property type="evidence" value="ECO:0007669"/>
    <property type="project" value="InterPro"/>
</dbReference>
<dbReference type="GO" id="GO:0000160">
    <property type="term" value="P:phosphorelay signal transduction system"/>
    <property type="evidence" value="ECO:0007669"/>
    <property type="project" value="UniProtKB-KW"/>
</dbReference>
<dbReference type="GO" id="GO:0006355">
    <property type="term" value="P:regulation of DNA-templated transcription"/>
    <property type="evidence" value="ECO:0007669"/>
    <property type="project" value="InterPro"/>
</dbReference>
<dbReference type="CDD" id="cd00009">
    <property type="entry name" value="AAA"/>
    <property type="match status" value="1"/>
</dbReference>
<dbReference type="CDD" id="cd17572">
    <property type="entry name" value="REC_NtrC1-like"/>
    <property type="match status" value="1"/>
</dbReference>
<dbReference type="FunFam" id="3.40.50.300:FF:000006">
    <property type="entry name" value="DNA-binding transcriptional regulator NtrC"/>
    <property type="match status" value="1"/>
</dbReference>
<dbReference type="FunFam" id="1.10.10.60:FF:000343">
    <property type="entry name" value="Sigma-54-dependent Fis family transcriptional regulator"/>
    <property type="match status" value="1"/>
</dbReference>
<dbReference type="FunFam" id="1.10.8.60:FF:000120">
    <property type="entry name" value="Sigma-54-dependent Fis family transcriptional regulator"/>
    <property type="match status" value="1"/>
</dbReference>
<dbReference type="FunFam" id="3.40.50.2300:FF:000225">
    <property type="entry name" value="Sigma-54-dependent Fis family transcriptional regulator"/>
    <property type="match status" value="1"/>
</dbReference>
<dbReference type="Gene3D" id="1.10.8.60">
    <property type="match status" value="1"/>
</dbReference>
<dbReference type="Gene3D" id="3.40.50.2300">
    <property type="match status" value="1"/>
</dbReference>
<dbReference type="Gene3D" id="1.10.10.60">
    <property type="entry name" value="Homeodomain-like"/>
    <property type="match status" value="1"/>
</dbReference>
<dbReference type="Gene3D" id="3.40.50.300">
    <property type="entry name" value="P-loop containing nucleotide triphosphate hydrolases"/>
    <property type="match status" value="1"/>
</dbReference>
<dbReference type="InterPro" id="IPR003593">
    <property type="entry name" value="AAA+_ATPase"/>
</dbReference>
<dbReference type="InterPro" id="IPR011006">
    <property type="entry name" value="CheY-like_superfamily"/>
</dbReference>
<dbReference type="InterPro" id="IPR009057">
    <property type="entry name" value="Homeodomain-like_sf"/>
</dbReference>
<dbReference type="InterPro" id="IPR002197">
    <property type="entry name" value="HTH_Fis"/>
</dbReference>
<dbReference type="InterPro" id="IPR027417">
    <property type="entry name" value="P-loop_NTPase"/>
</dbReference>
<dbReference type="InterPro" id="IPR053402">
    <property type="entry name" value="QS_regulatory_LuxO"/>
</dbReference>
<dbReference type="InterPro" id="IPR001789">
    <property type="entry name" value="Sig_transdc_resp-reg_receiver"/>
</dbReference>
<dbReference type="InterPro" id="IPR002078">
    <property type="entry name" value="Sigma_54_int"/>
</dbReference>
<dbReference type="InterPro" id="IPR025943">
    <property type="entry name" value="Sigma_54_int_dom_ATP-bd_2"/>
</dbReference>
<dbReference type="InterPro" id="IPR025944">
    <property type="entry name" value="Sigma_54_int_dom_CS"/>
</dbReference>
<dbReference type="NCBIfam" id="NF041946">
    <property type="entry name" value="LuxO_transreg_Vib"/>
    <property type="match status" value="1"/>
</dbReference>
<dbReference type="PANTHER" id="PTHR32071:SF117">
    <property type="entry name" value="PTS-DEPENDENT DIHYDROXYACETONE KINASE OPERON REGULATORY PROTEIN-RELATED"/>
    <property type="match status" value="1"/>
</dbReference>
<dbReference type="PANTHER" id="PTHR32071">
    <property type="entry name" value="TRANSCRIPTIONAL REGULATORY PROTEIN"/>
    <property type="match status" value="1"/>
</dbReference>
<dbReference type="Pfam" id="PF02954">
    <property type="entry name" value="HTH_8"/>
    <property type="match status" value="1"/>
</dbReference>
<dbReference type="Pfam" id="PF00072">
    <property type="entry name" value="Response_reg"/>
    <property type="match status" value="1"/>
</dbReference>
<dbReference type="Pfam" id="PF00158">
    <property type="entry name" value="Sigma54_activat"/>
    <property type="match status" value="1"/>
</dbReference>
<dbReference type="SMART" id="SM00382">
    <property type="entry name" value="AAA"/>
    <property type="match status" value="1"/>
</dbReference>
<dbReference type="SMART" id="SM00448">
    <property type="entry name" value="REC"/>
    <property type="match status" value="1"/>
</dbReference>
<dbReference type="SUPFAM" id="SSF52172">
    <property type="entry name" value="CheY-like"/>
    <property type="match status" value="1"/>
</dbReference>
<dbReference type="SUPFAM" id="SSF46689">
    <property type="entry name" value="Homeodomain-like"/>
    <property type="match status" value="1"/>
</dbReference>
<dbReference type="SUPFAM" id="SSF52540">
    <property type="entry name" value="P-loop containing nucleoside triphosphate hydrolases"/>
    <property type="match status" value="1"/>
</dbReference>
<dbReference type="PROSITE" id="PS50110">
    <property type="entry name" value="RESPONSE_REGULATORY"/>
    <property type="match status" value="1"/>
</dbReference>
<dbReference type="PROSITE" id="PS00676">
    <property type="entry name" value="SIGMA54_INTERACT_2"/>
    <property type="match status" value="1"/>
</dbReference>
<dbReference type="PROSITE" id="PS00688">
    <property type="entry name" value="SIGMA54_INTERACT_3"/>
    <property type="match status" value="1"/>
</dbReference>
<dbReference type="PROSITE" id="PS50045">
    <property type="entry name" value="SIGMA54_INTERACT_4"/>
    <property type="match status" value="1"/>
</dbReference>
<reference key="1">
    <citation type="journal article" date="2003" name="Genome Res.">
        <title>Comparative genome analysis of Vibrio vulnificus, a marine pathogen.</title>
        <authorList>
            <person name="Chen C.-Y."/>
            <person name="Wu K.-M."/>
            <person name="Chang Y.-C."/>
            <person name="Chang C.-H."/>
            <person name="Tsai H.-C."/>
            <person name="Liao T.-L."/>
            <person name="Liu Y.-M."/>
            <person name="Chen H.-J."/>
            <person name="Shen A.B.-T."/>
            <person name="Li J.-C."/>
            <person name="Su T.-L."/>
            <person name="Shao C.-P."/>
            <person name="Lee C.-T."/>
            <person name="Hor L.-I."/>
            <person name="Tsai S.-F."/>
        </authorList>
    </citation>
    <scope>NUCLEOTIDE SEQUENCE [LARGE SCALE GENOMIC DNA]</scope>
    <source>
        <strain>YJ016</strain>
    </source>
</reference>
<gene>
    <name type="primary">luxO</name>
    <name type="ordered locus">VV1195</name>
</gene>
<sequence>MVEDTASVAALYRSYLMPLGIDINIVGTGRDAIDSLKHRIPDLILLDLRLPDMTGMDVLHAVKASHPDVPIIFMTAHGSIDTAVEAMRHGSQDFLIKPCEADRLRVTVNNAIRKASKLKNDADSAGSQNYQGFIGSSQKMQQVYRTIDSAASSKASIFITGESGTGKEVCAEAIHAASRRGDKPFIAINCAAIPKDLIESELFGHVKGAFTGAATDRQGAAELADGGTLFLDELCEMDLDLQTKLLRFIQTGTFQKVGSSKMKSVDVRFVCATNRDPWKEVQEGRFREDLYYRLYVIPLHLPPLRERGEDVIEIAYSLLGYMSHEEGKNFVRFSQPVIDRFNEYEWPGNVRQLQNVLRNVVVLNNGKEITMEMLPPPLNQPFERKESVQPDLSELISVRDICPLWLTEKLAIEQAIKACDGNIPRAAGYLDVSPSTIYRKLQAWNEKEEKQKA</sequence>
<name>LUXO_VIBVY</name>
<organism>
    <name type="scientific">Vibrio vulnificus (strain YJ016)</name>
    <dbReference type="NCBI Taxonomy" id="196600"/>
    <lineage>
        <taxon>Bacteria</taxon>
        <taxon>Pseudomonadati</taxon>
        <taxon>Pseudomonadota</taxon>
        <taxon>Gammaproteobacteria</taxon>
        <taxon>Vibrionales</taxon>
        <taxon>Vibrionaceae</taxon>
        <taxon>Vibrio</taxon>
    </lineage>
</organism>